<accession>Q37619</accession>
<proteinExistence type="inferred from homology"/>
<keyword id="KW-0249">Electron transport</keyword>
<keyword id="KW-0496">Mitochondrion</keyword>
<keyword id="KW-0520">NAD</keyword>
<keyword id="KW-0560">Oxidoreductase</keyword>
<keyword id="KW-0679">Respiratory chain</keyword>
<keyword id="KW-1278">Translocase</keyword>
<keyword id="KW-0813">Transport</keyword>
<keyword id="KW-0830">Ubiquinone</keyword>
<sequence length="400" mass="45810">MALEKIITAPKYKNFTINFGPQHPAAHGVLRLVLEMNGEVVQRSDPHIGLLHRGTEKLIEYKNYLQALPYFDRLDYVSMMCQEHAYSLAVEKLLNISKDIPLRAQYIRVLFSEITRILNHLLAVTCHAMDVGALTPFLWGFEEREKLMEFYERVSGARMHAAYIRPGGVALDLPLGLCEDIYKFSKQFASRIDEIEEMLTSNRIWKQRLVDVGVVSAEQALDWSFSGVLLRGSGIAWDLRKTQPYEVYDRMKFNIPVGTRGDCYDRYLIRVQEMRESLRIVMQTINEMSKGIIRLDDRKITPPTRDQMKQSMESLIHHFKFYTGGFVVPAGETYTAVEAPKGEFGVYLVSNGTSKPYRCKIRAPGFAHLQGLDFMARNHMLADVVTIIGTQDIVFGEVDR</sequence>
<reference key="1">
    <citation type="journal article" date="1994" name="J. Mol. Biol.">
        <title>Complete sequence of the mitochondrial DNA of the chlorophyte alga Prototheca wickerhamii. Gene content and genome organization.</title>
        <authorList>
            <person name="Wolff G."/>
            <person name="Plante I."/>
            <person name="Lang B.F."/>
            <person name="Kueck U."/>
            <person name="Burger G."/>
        </authorList>
    </citation>
    <scope>NUCLEOTIDE SEQUENCE [GENOMIC DNA]</scope>
    <source>
        <strain>263-11</strain>
    </source>
</reference>
<evidence type="ECO:0000250" key="1"/>
<evidence type="ECO:0000305" key="2"/>
<comment type="function">
    <text evidence="1">Core subunit of the mitochondrial membrane respiratory chain NADH dehydrogenase (Complex I) that is believed to belong to the minimal assembly required for catalysis. Complex I functions in the transfer of electrons from NADH to the respiratory chain. The immediate electron acceptor for the enzyme is believed to be ubiquinone (By similarity). Component of the iron-sulfur (IP) fragment of the enzyme. Component of the iron-sulfur (IP) fragment of the enzyme.</text>
</comment>
<comment type="catalytic activity">
    <reaction>
        <text>a ubiquinone + NADH + 5 H(+)(in) = a ubiquinol + NAD(+) + 4 H(+)(out)</text>
        <dbReference type="Rhea" id="RHEA:29091"/>
        <dbReference type="Rhea" id="RHEA-COMP:9565"/>
        <dbReference type="Rhea" id="RHEA-COMP:9566"/>
        <dbReference type="ChEBI" id="CHEBI:15378"/>
        <dbReference type="ChEBI" id="CHEBI:16389"/>
        <dbReference type="ChEBI" id="CHEBI:17976"/>
        <dbReference type="ChEBI" id="CHEBI:57540"/>
        <dbReference type="ChEBI" id="CHEBI:57945"/>
        <dbReference type="EC" id="7.1.1.2"/>
    </reaction>
</comment>
<comment type="subcellular location">
    <subcellularLocation>
        <location>Mitochondrion</location>
    </subcellularLocation>
</comment>
<comment type="similarity">
    <text evidence="2">Belongs to the complex I 49 kDa subunit family.</text>
</comment>
<feature type="chain" id="PRO_0000118591" description="NADH-ubiquinone oxidoreductase 49 kDa subunit">
    <location>
        <begin position="1"/>
        <end position="400"/>
    </location>
</feature>
<name>NDUS2_PROWI</name>
<gene>
    <name type="primary">NAD7</name>
</gene>
<geneLocation type="mitochondrion"/>
<dbReference type="EC" id="7.1.1.2"/>
<dbReference type="EMBL" id="U02970">
    <property type="protein sequence ID" value="AAD12640.1"/>
    <property type="molecule type" value="Genomic_DNA"/>
</dbReference>
<dbReference type="PIR" id="T11921">
    <property type="entry name" value="T11921"/>
</dbReference>
<dbReference type="RefSeq" id="NP_042252.1">
    <property type="nucleotide sequence ID" value="NC_001613.1"/>
</dbReference>
<dbReference type="SMR" id="Q37619"/>
<dbReference type="GeneID" id="802126"/>
<dbReference type="GO" id="GO:0005739">
    <property type="term" value="C:mitochondrion"/>
    <property type="evidence" value="ECO:0007669"/>
    <property type="project" value="UniProtKB-SubCell"/>
</dbReference>
<dbReference type="GO" id="GO:0051287">
    <property type="term" value="F:NAD binding"/>
    <property type="evidence" value="ECO:0007669"/>
    <property type="project" value="InterPro"/>
</dbReference>
<dbReference type="GO" id="GO:0008137">
    <property type="term" value="F:NADH dehydrogenase (ubiquinone) activity"/>
    <property type="evidence" value="ECO:0007669"/>
    <property type="project" value="UniProtKB-EC"/>
</dbReference>
<dbReference type="GO" id="GO:0048038">
    <property type="term" value="F:quinone binding"/>
    <property type="evidence" value="ECO:0007669"/>
    <property type="project" value="InterPro"/>
</dbReference>
<dbReference type="GO" id="GO:0006120">
    <property type="term" value="P:mitochondrial electron transport, NADH to ubiquinone"/>
    <property type="evidence" value="ECO:0007669"/>
    <property type="project" value="TreeGrafter"/>
</dbReference>
<dbReference type="FunFam" id="1.10.645.10:FF:000005">
    <property type="entry name" value="NADH-quinone oxidoreductase subunit D"/>
    <property type="match status" value="1"/>
</dbReference>
<dbReference type="Gene3D" id="1.10.645.10">
    <property type="entry name" value="Cytochrome-c3 Hydrogenase, chain B"/>
    <property type="match status" value="1"/>
</dbReference>
<dbReference type="HAMAP" id="MF_01358">
    <property type="entry name" value="NDH1_NuoD"/>
    <property type="match status" value="1"/>
</dbReference>
<dbReference type="InterPro" id="IPR001135">
    <property type="entry name" value="NADH_Q_OxRdtase_suD"/>
</dbReference>
<dbReference type="InterPro" id="IPR014029">
    <property type="entry name" value="NADH_UbQ_OxRdtase_49kDa_CS"/>
</dbReference>
<dbReference type="InterPro" id="IPR022885">
    <property type="entry name" value="NDH1_su_D/H"/>
</dbReference>
<dbReference type="InterPro" id="IPR029014">
    <property type="entry name" value="NiFe-Hase_large"/>
</dbReference>
<dbReference type="NCBIfam" id="TIGR01962">
    <property type="entry name" value="NuoD"/>
    <property type="match status" value="1"/>
</dbReference>
<dbReference type="NCBIfam" id="NF004739">
    <property type="entry name" value="PRK06075.1"/>
    <property type="match status" value="1"/>
</dbReference>
<dbReference type="PANTHER" id="PTHR11993:SF10">
    <property type="entry name" value="NADH DEHYDROGENASE [UBIQUINONE] IRON-SULFUR PROTEIN 2, MITOCHONDRIAL"/>
    <property type="match status" value="1"/>
</dbReference>
<dbReference type="PANTHER" id="PTHR11993">
    <property type="entry name" value="NADH-UBIQUINONE OXIDOREDUCTASE 49 KDA SUBUNIT"/>
    <property type="match status" value="1"/>
</dbReference>
<dbReference type="Pfam" id="PF00346">
    <property type="entry name" value="Complex1_49kDa"/>
    <property type="match status" value="1"/>
</dbReference>
<dbReference type="SUPFAM" id="SSF56762">
    <property type="entry name" value="HydB/Nqo4-like"/>
    <property type="match status" value="1"/>
</dbReference>
<dbReference type="PROSITE" id="PS00535">
    <property type="entry name" value="COMPLEX1_49K"/>
    <property type="match status" value="1"/>
</dbReference>
<organism>
    <name type="scientific">Prototheca wickerhamii</name>
    <dbReference type="NCBI Taxonomy" id="3111"/>
    <lineage>
        <taxon>Eukaryota</taxon>
        <taxon>Viridiplantae</taxon>
        <taxon>Chlorophyta</taxon>
        <taxon>core chlorophytes</taxon>
        <taxon>Trebouxiophyceae</taxon>
        <taxon>Chlorellales</taxon>
        <taxon>Chlorellaceae</taxon>
        <taxon>Prototheca</taxon>
    </lineage>
</organism>
<protein>
    <recommendedName>
        <fullName>NADH-ubiquinone oxidoreductase 49 kDa subunit</fullName>
        <ecNumber>7.1.1.2</ecNumber>
    </recommendedName>
    <alternativeName>
        <fullName>NADH dehydrogenase subunit 7</fullName>
    </alternativeName>
</protein>